<protein>
    <recommendedName>
        <fullName>Venom peptide Ocy6</fullName>
    </recommendedName>
</protein>
<comment type="subcellular location">
    <subcellularLocation>
        <location evidence="1">Secreted</location>
    </subcellularLocation>
</comment>
<comment type="tissue specificity">
    <text evidence="1">Expressed by the venom gland.</text>
</comment>
<sequence length="18" mass="2035">GWGRTIRTHXSIDLNXGE</sequence>
<name>VP06_OPICY</name>
<organism>
    <name type="scientific">Opisthacanthus cayaporum</name>
    <name type="common">South American scorpion</name>
    <dbReference type="NCBI Taxonomy" id="573324"/>
    <lineage>
        <taxon>Eukaryota</taxon>
        <taxon>Metazoa</taxon>
        <taxon>Ecdysozoa</taxon>
        <taxon>Arthropoda</taxon>
        <taxon>Chelicerata</taxon>
        <taxon>Arachnida</taxon>
        <taxon>Scorpiones</taxon>
        <taxon>Iurida</taxon>
        <taxon>Scorpionoidea</taxon>
        <taxon>Hemiscorpiidae</taxon>
        <taxon>Opisthacanthus</taxon>
    </lineage>
</organism>
<reference evidence="3" key="1">
    <citation type="journal article" date="2008" name="Toxicon">
        <title>Mass spectrometry analysis, amino acid sequence and biological activity of venom components from the Brazilian scorpion Opisthacanthus cayaporum.</title>
        <authorList>
            <person name="Schwartz E.F."/>
            <person name="Camargos T.S."/>
            <person name="Zamudio F.Z."/>
            <person name="Silva L.P."/>
            <person name="Bloch C. Jr."/>
            <person name="Caixeta F."/>
            <person name="Schwartz C.A."/>
            <person name="Possani L.D."/>
        </authorList>
    </citation>
    <scope>PROTEIN SEQUENCE</scope>
    <scope>SUBCELLULAR LOCATION</scope>
    <scope>TISSUE SPECIFICITY</scope>
    <source>
        <tissue evidence="1">Venom</tissue>
    </source>
</reference>
<dbReference type="GO" id="GO:0005576">
    <property type="term" value="C:extracellular region"/>
    <property type="evidence" value="ECO:0007669"/>
    <property type="project" value="UniProtKB-SubCell"/>
</dbReference>
<keyword id="KW-0903">Direct protein sequencing</keyword>
<keyword id="KW-0964">Secreted</keyword>
<feature type="peptide" id="PRO_0000398142" description="Venom peptide Ocy6" evidence="1">
    <location>
        <begin position="1"/>
        <end position="18" status="greater than"/>
    </location>
</feature>
<feature type="non-terminal residue" evidence="2">
    <location>
        <position position="18"/>
    </location>
</feature>
<accession>P86112</accession>
<evidence type="ECO:0000269" key="1">
    <source>
    </source>
</evidence>
<evidence type="ECO:0000303" key="2">
    <source>
    </source>
</evidence>
<evidence type="ECO:0000305" key="3"/>
<proteinExistence type="evidence at protein level"/>